<dbReference type="EMBL" id="CP000034">
    <property type="protein sequence ID" value="ABB60317.1"/>
    <property type="molecule type" value="Genomic_DNA"/>
</dbReference>
<dbReference type="RefSeq" id="WP_000746141.1">
    <property type="nucleotide sequence ID" value="NC_007606.1"/>
</dbReference>
<dbReference type="RefSeq" id="YP_401806.1">
    <property type="nucleotide sequence ID" value="NC_007606.1"/>
</dbReference>
<dbReference type="SMR" id="Q32K40"/>
<dbReference type="STRING" id="300267.SDY_0079"/>
<dbReference type="EnsemblBacteria" id="ABB60317">
    <property type="protein sequence ID" value="ABB60317"/>
    <property type="gene ID" value="SDY_0079"/>
</dbReference>
<dbReference type="KEGG" id="sdy:SDY_0079"/>
<dbReference type="PATRIC" id="fig|300267.13.peg.89"/>
<dbReference type="HOGENOM" id="CLU_009039_2_0_6"/>
<dbReference type="Proteomes" id="UP000002716">
    <property type="component" value="Chromosome"/>
</dbReference>
<dbReference type="GO" id="GO:0009279">
    <property type="term" value="C:cell outer membrane"/>
    <property type="evidence" value="ECO:0007669"/>
    <property type="project" value="UniProtKB-SubCell"/>
</dbReference>
<dbReference type="GO" id="GO:1990351">
    <property type="term" value="C:transporter complex"/>
    <property type="evidence" value="ECO:0007669"/>
    <property type="project" value="TreeGrafter"/>
</dbReference>
<dbReference type="GO" id="GO:0043165">
    <property type="term" value="P:Gram-negative-bacterium-type cell outer membrane assembly"/>
    <property type="evidence" value="ECO:0007669"/>
    <property type="project" value="UniProtKB-UniRule"/>
</dbReference>
<dbReference type="GO" id="GO:0015920">
    <property type="term" value="P:lipopolysaccharide transport"/>
    <property type="evidence" value="ECO:0007669"/>
    <property type="project" value="InterPro"/>
</dbReference>
<dbReference type="FunFam" id="2.60.450.10:FF:000003">
    <property type="entry name" value="LPS-assembly protein LptD"/>
    <property type="match status" value="1"/>
</dbReference>
<dbReference type="Gene3D" id="2.60.450.10">
    <property type="entry name" value="Lipopolysaccharide (LPS) transport protein A like domain"/>
    <property type="match status" value="1"/>
</dbReference>
<dbReference type="HAMAP" id="MF_01411">
    <property type="entry name" value="LPS_assembly_LptD"/>
    <property type="match status" value="1"/>
</dbReference>
<dbReference type="InterPro" id="IPR020889">
    <property type="entry name" value="LipoPS_assembly_LptD"/>
</dbReference>
<dbReference type="InterPro" id="IPR050218">
    <property type="entry name" value="LptD"/>
</dbReference>
<dbReference type="InterPro" id="IPR007543">
    <property type="entry name" value="LptD_C"/>
</dbReference>
<dbReference type="InterPro" id="IPR005653">
    <property type="entry name" value="OstA-like_N"/>
</dbReference>
<dbReference type="NCBIfam" id="NF002997">
    <property type="entry name" value="PRK03761.1"/>
    <property type="match status" value="1"/>
</dbReference>
<dbReference type="PANTHER" id="PTHR30189">
    <property type="entry name" value="LPS-ASSEMBLY PROTEIN"/>
    <property type="match status" value="1"/>
</dbReference>
<dbReference type="PANTHER" id="PTHR30189:SF1">
    <property type="entry name" value="LPS-ASSEMBLY PROTEIN LPTD"/>
    <property type="match status" value="1"/>
</dbReference>
<dbReference type="Pfam" id="PF04453">
    <property type="entry name" value="LptD"/>
    <property type="match status" value="1"/>
</dbReference>
<dbReference type="Pfam" id="PF03968">
    <property type="entry name" value="LptD_N"/>
    <property type="match status" value="1"/>
</dbReference>
<keyword id="KW-0998">Cell outer membrane</keyword>
<keyword id="KW-1015">Disulfide bond</keyword>
<keyword id="KW-0472">Membrane</keyword>
<keyword id="KW-1185">Reference proteome</keyword>
<keyword id="KW-0732">Signal</keyword>
<organism>
    <name type="scientific">Shigella dysenteriae serotype 1 (strain Sd197)</name>
    <dbReference type="NCBI Taxonomy" id="300267"/>
    <lineage>
        <taxon>Bacteria</taxon>
        <taxon>Pseudomonadati</taxon>
        <taxon>Pseudomonadota</taxon>
        <taxon>Gammaproteobacteria</taxon>
        <taxon>Enterobacterales</taxon>
        <taxon>Enterobacteriaceae</taxon>
        <taxon>Shigella</taxon>
    </lineage>
</organism>
<accession>Q32K40</accession>
<sequence length="784" mass="89584">MKKRIPTLLATMIATALYSQQGLAADLASQCMLGVPSYDRPLVQGDTNDLPVTINADHAKGDYPDDAVFTGSVDIMQGNSRLQADEVQLHQKEAPGQPEPVRTVDALGNVHYDDNQVILKGPKGWANLNTKDTNVWEGDYQMVGRQGRGKADLMKQRGENRYTILDNGSFTSCLPGSDTWSVVGSEIIHDREEQVAEIWNARFKVGPVPIFYSPYLQLPVGDKRRSGFLIPNAKYTTTNYFEFYLPYYWNIAANMDATITPHYMHRRGNIMWENEFRYLSQAGAGLMELDYLPSDKVYKDEHPNDDSSRRWLFYWQHSGVMDQVWRFNVDYTKVSDPSYFNDFDNKYGSSTDGYATQKFSVGYAVQNFNATVSTKQFQVFSEQNTSSYSAEPQLDVNYYQNDVGPFDTRIYGQAVHFVNTRDDMPEATRVHLEPTINLPLSNNWGSINTEAKLLATHYQQTNLDWYNSRNTTKLDESVNRVMPQFKVDGKMVFERDMEMLAPGYTQTLEPRAQYLYVPYRDQSDIYNYDSSLLQSDYSGLFRGRTYGGLDRIASANQVTTGVTSRIYDDAAVERFNISVGQIYYFTESRTGDDNITWENDDKTGSLVWAGDTYWRISERWGLRGGIQYDTRLDNVATSNSSIEYRRDEDRLVQLNYRYASPEYIQATLPKYYSTAEQYKNGISQVGAVASWPIADRWSIVGAYYYDTNANKQADSMLGVQYSSCCYAIRVGYERKPNGWDNDKQHAVYDNAIGFNIELRGLSSNYGLGTQEMLRSNILPYQNTL</sequence>
<proteinExistence type="inferred from homology"/>
<reference key="1">
    <citation type="journal article" date="2005" name="Nucleic Acids Res.">
        <title>Genome dynamics and diversity of Shigella species, the etiologic agents of bacillary dysentery.</title>
        <authorList>
            <person name="Yang F."/>
            <person name="Yang J."/>
            <person name="Zhang X."/>
            <person name="Chen L."/>
            <person name="Jiang Y."/>
            <person name="Yan Y."/>
            <person name="Tang X."/>
            <person name="Wang J."/>
            <person name="Xiong Z."/>
            <person name="Dong J."/>
            <person name="Xue Y."/>
            <person name="Zhu Y."/>
            <person name="Xu X."/>
            <person name="Sun L."/>
            <person name="Chen S."/>
            <person name="Nie H."/>
            <person name="Peng J."/>
            <person name="Xu J."/>
            <person name="Wang Y."/>
            <person name="Yuan Z."/>
            <person name="Wen Y."/>
            <person name="Yao Z."/>
            <person name="Shen Y."/>
            <person name="Qiang B."/>
            <person name="Hou Y."/>
            <person name="Yu J."/>
            <person name="Jin Q."/>
        </authorList>
    </citation>
    <scope>NUCLEOTIDE SEQUENCE [LARGE SCALE GENOMIC DNA]</scope>
    <source>
        <strain>Sd197</strain>
    </source>
</reference>
<gene>
    <name evidence="1" type="primary">lptD</name>
    <name type="synonym">imp</name>
    <name type="synonym">ostA</name>
    <name type="ordered locus">SDY_0079</name>
</gene>
<evidence type="ECO:0000255" key="1">
    <source>
        <dbReference type="HAMAP-Rule" id="MF_01411"/>
    </source>
</evidence>
<feature type="signal peptide" evidence="1">
    <location>
        <begin position="1"/>
        <end position="24"/>
    </location>
</feature>
<feature type="chain" id="PRO_0000281636" description="LPS-assembly protein LptD">
    <location>
        <begin position="25"/>
        <end position="784"/>
    </location>
</feature>
<feature type="disulfide bond" evidence="1">
    <location>
        <begin position="31"/>
        <end position="724"/>
    </location>
</feature>
<feature type="disulfide bond" evidence="1">
    <location>
        <begin position="173"/>
        <end position="725"/>
    </location>
</feature>
<comment type="function">
    <text evidence="1">Together with LptE, is involved in the assembly of lipopolysaccharide (LPS) at the surface of the outer membrane.</text>
</comment>
<comment type="subunit">
    <text evidence="1">Component of the lipopolysaccharide transport and assembly complex. Interacts with LptE and LptA.</text>
</comment>
<comment type="subcellular location">
    <subcellularLocation>
        <location evidence="1">Cell outer membrane</location>
    </subcellularLocation>
</comment>
<comment type="PTM">
    <text evidence="1">Contains two intramolecular disulfide bonds.</text>
</comment>
<comment type="similarity">
    <text evidence="1">Belongs to the LptD family.</text>
</comment>
<protein>
    <recommendedName>
        <fullName evidence="1">LPS-assembly protein LptD</fullName>
    </recommendedName>
</protein>
<name>LPTD_SHIDS</name>